<accession>P49720</accession>
<accession>P31147</accession>
<accession>Q0P6J7</accession>
<accession>Q96E27</accession>
<protein>
    <recommendedName>
        <fullName evidence="17">Proteasome subunit beta type-3</fullName>
    </recommendedName>
    <alternativeName>
        <fullName>Proteasome chain 13</fullName>
    </alternativeName>
    <alternativeName>
        <fullName>Proteasome component C10-II</fullName>
    </alternativeName>
    <alternativeName>
        <fullName evidence="16">Proteasome subunit beta-3</fullName>
        <shortName evidence="16">beta-3</shortName>
    </alternativeName>
    <alternativeName>
        <fullName>Proteasome theta chain</fullName>
    </alternativeName>
</protein>
<proteinExistence type="evidence at protein level"/>
<feature type="initiator methionine" description="Removed" evidence="15 19 21">
    <location>
        <position position="1"/>
    </location>
</feature>
<feature type="chain" id="PRO_0000148057" description="Proteasome subunit beta type-3">
    <location>
        <begin position="2"/>
        <end position="205"/>
    </location>
</feature>
<feature type="modified residue" description="N-acetylserine" evidence="15 19 21">
    <location>
        <position position="2"/>
    </location>
</feature>
<feature type="modified residue" description="N6-acetyllysine" evidence="20">
    <location>
        <position position="77"/>
    </location>
</feature>
<feature type="sequence variant" id="VAR_034415" description="In dbSNP:rs4907." evidence="13">
    <original>M</original>
    <variation>L</variation>
    <location>
        <position position="34"/>
    </location>
</feature>
<feature type="helix" evidence="22">
    <location>
        <begin position="3"/>
        <end position="5"/>
    </location>
</feature>
<feature type="strand" evidence="22">
    <location>
        <begin position="10"/>
        <end position="15"/>
    </location>
</feature>
<feature type="strand" evidence="22">
    <location>
        <begin position="20"/>
        <end position="25"/>
    </location>
</feature>
<feature type="strand" evidence="22">
    <location>
        <begin position="28"/>
        <end position="30"/>
    </location>
</feature>
<feature type="strand" evidence="22">
    <location>
        <begin position="33"/>
        <end position="37"/>
    </location>
</feature>
<feature type="strand" evidence="22">
    <location>
        <begin position="42"/>
        <end position="46"/>
    </location>
</feature>
<feature type="strand" evidence="22">
    <location>
        <begin position="49"/>
        <end position="55"/>
    </location>
</feature>
<feature type="helix" evidence="22">
    <location>
        <begin position="57"/>
        <end position="78"/>
    </location>
</feature>
<feature type="helix" evidence="22">
    <location>
        <begin position="84"/>
        <end position="97"/>
    </location>
</feature>
<feature type="turn" evidence="22">
    <location>
        <begin position="98"/>
        <end position="100"/>
    </location>
</feature>
<feature type="strand" evidence="22">
    <location>
        <begin position="104"/>
        <end position="112"/>
    </location>
</feature>
<feature type="turn" evidence="22">
    <location>
        <begin position="114"/>
        <end position="116"/>
    </location>
</feature>
<feature type="strand" evidence="22">
    <location>
        <begin position="119"/>
        <end position="124"/>
    </location>
</feature>
<feature type="strand" evidence="22">
    <location>
        <begin position="130"/>
        <end position="140"/>
    </location>
</feature>
<feature type="helix" evidence="22">
    <location>
        <begin position="143"/>
        <end position="153"/>
    </location>
</feature>
<feature type="helix" evidence="22">
    <location>
        <begin position="160"/>
        <end position="175"/>
    </location>
</feature>
<feature type="strand" evidence="23">
    <location>
        <begin position="177"/>
        <end position="181"/>
    </location>
</feature>
<feature type="strand" evidence="22">
    <location>
        <begin position="185"/>
        <end position="190"/>
    </location>
</feature>
<feature type="strand" evidence="22">
    <location>
        <begin position="192"/>
        <end position="200"/>
    </location>
</feature>
<evidence type="ECO:0000255" key="1">
    <source>
        <dbReference type="PROSITE-ProRule" id="PRU00809"/>
    </source>
</evidence>
<evidence type="ECO:0000269" key="2">
    <source>
    </source>
</evidence>
<evidence type="ECO:0000269" key="3">
    <source>
    </source>
</evidence>
<evidence type="ECO:0000269" key="4">
    <source>
    </source>
</evidence>
<evidence type="ECO:0000269" key="5">
    <source>
    </source>
</evidence>
<evidence type="ECO:0000269" key="6">
    <source>
    </source>
</evidence>
<evidence type="ECO:0000269" key="7">
    <source>
    </source>
</evidence>
<evidence type="ECO:0000269" key="8">
    <source>
    </source>
</evidence>
<evidence type="ECO:0000269" key="9">
    <source>
    </source>
</evidence>
<evidence type="ECO:0000269" key="10">
    <source>
    </source>
</evidence>
<evidence type="ECO:0000269" key="11">
    <source>
    </source>
</evidence>
<evidence type="ECO:0000269" key="12">
    <source>
    </source>
</evidence>
<evidence type="ECO:0000269" key="13">
    <source>
    </source>
</evidence>
<evidence type="ECO:0000269" key="14">
    <source>
    </source>
</evidence>
<evidence type="ECO:0000269" key="15">
    <source ref="3"/>
</evidence>
<evidence type="ECO:0000303" key="16">
    <source>
    </source>
</evidence>
<evidence type="ECO:0000305" key="17"/>
<evidence type="ECO:0000312" key="18">
    <source>
        <dbReference type="HGNC" id="HGNC:9540"/>
    </source>
</evidence>
<evidence type="ECO:0007744" key="19">
    <source>
    </source>
</evidence>
<evidence type="ECO:0007744" key="20">
    <source>
    </source>
</evidence>
<evidence type="ECO:0007744" key="21">
    <source>
    </source>
</evidence>
<evidence type="ECO:0007829" key="22">
    <source>
        <dbReference type="PDB" id="5LE5"/>
    </source>
</evidence>
<evidence type="ECO:0007829" key="23">
    <source>
        <dbReference type="PDB" id="6RGQ"/>
    </source>
</evidence>
<gene>
    <name evidence="18" type="primary">PSMB3</name>
</gene>
<sequence length="205" mass="22949">MSIMSYNGGAVMAMKGKNCVAIAADRRFGIQAQMVTTDFQKIFPMGDRLYIGLAGLATDVQTVAQRLKFRLNLYELKEGRQIKPYTLMSMVANLLYEKRFGPYYTEPVIAGLDPKTFKPFICSLDLIGCPMVTDDFVVSGTCAEQMYGMCESLWEPNMDPDHLFETISQAMLNAVDRDAVSGMGVIVHIIEKDKITTRTLKARMD</sequence>
<keyword id="KW-0002">3D-structure</keyword>
<keyword id="KW-0007">Acetylation</keyword>
<keyword id="KW-0963">Cytoplasm</keyword>
<keyword id="KW-0903">Direct protein sequencing</keyword>
<keyword id="KW-0945">Host-virus interaction</keyword>
<keyword id="KW-0539">Nucleus</keyword>
<keyword id="KW-0647">Proteasome</keyword>
<keyword id="KW-1267">Proteomics identification</keyword>
<keyword id="KW-1185">Reference proteome</keyword>
<dbReference type="EMBL" id="D26598">
    <property type="protein sequence ID" value="BAA05645.1"/>
    <property type="molecule type" value="mRNA"/>
</dbReference>
<dbReference type="EMBL" id="BC013008">
    <property type="protein sequence ID" value="AAH13008.1"/>
    <property type="molecule type" value="mRNA"/>
</dbReference>
<dbReference type="CCDS" id="CCDS11328.1"/>
<dbReference type="PIR" id="S55041">
    <property type="entry name" value="S55041"/>
</dbReference>
<dbReference type="RefSeq" id="NP_002786.2">
    <property type="nucleotide sequence ID" value="NM_002795.3"/>
</dbReference>
<dbReference type="PDB" id="4R3O">
    <property type="method" value="X-ray"/>
    <property type="resolution" value="2.60 A"/>
    <property type="chains" value="J/X=2-205"/>
</dbReference>
<dbReference type="PDB" id="4R67">
    <property type="method" value="X-ray"/>
    <property type="resolution" value="2.89 A"/>
    <property type="chains" value="J/X/l/z=2-205"/>
</dbReference>
<dbReference type="PDB" id="5A0Q">
    <property type="method" value="EM"/>
    <property type="resolution" value="3.50 A"/>
    <property type="chains" value="J/X=2-205"/>
</dbReference>
<dbReference type="PDB" id="5GJQ">
    <property type="method" value="EM"/>
    <property type="resolution" value="4.50 A"/>
    <property type="chains" value="c/q=1-205"/>
</dbReference>
<dbReference type="PDB" id="5GJR">
    <property type="method" value="EM"/>
    <property type="resolution" value="3.50 A"/>
    <property type="chains" value="c/q=1-205"/>
</dbReference>
<dbReference type="PDB" id="5L4G">
    <property type="method" value="EM"/>
    <property type="resolution" value="4.02 A"/>
    <property type="chains" value="3/W=1-205"/>
</dbReference>
<dbReference type="PDB" id="5LE5">
    <property type="method" value="X-ray"/>
    <property type="resolution" value="1.80 A"/>
    <property type="chains" value="I/W=1-205"/>
</dbReference>
<dbReference type="PDB" id="5LEX">
    <property type="method" value="X-ray"/>
    <property type="resolution" value="2.20 A"/>
    <property type="chains" value="I/W=1-205"/>
</dbReference>
<dbReference type="PDB" id="5LEY">
    <property type="method" value="X-ray"/>
    <property type="resolution" value="1.90 A"/>
    <property type="chains" value="I/W=1-205"/>
</dbReference>
<dbReference type="PDB" id="5LEZ">
    <property type="method" value="X-ray"/>
    <property type="resolution" value="2.19 A"/>
    <property type="chains" value="I/W=1-205"/>
</dbReference>
<dbReference type="PDB" id="5LF0">
    <property type="method" value="X-ray"/>
    <property type="resolution" value="2.41 A"/>
    <property type="chains" value="I/W=1-205"/>
</dbReference>
<dbReference type="PDB" id="5LF1">
    <property type="method" value="X-ray"/>
    <property type="resolution" value="2.00 A"/>
    <property type="chains" value="I/W=1-205"/>
</dbReference>
<dbReference type="PDB" id="5LF3">
    <property type="method" value="X-ray"/>
    <property type="resolution" value="2.10 A"/>
    <property type="chains" value="I/W=1-205"/>
</dbReference>
<dbReference type="PDB" id="5LF4">
    <property type="method" value="X-ray"/>
    <property type="resolution" value="1.99 A"/>
    <property type="chains" value="I/W=1-205"/>
</dbReference>
<dbReference type="PDB" id="5LF6">
    <property type="method" value="X-ray"/>
    <property type="resolution" value="2.07 A"/>
    <property type="chains" value="I/W=1-205"/>
</dbReference>
<dbReference type="PDB" id="5LF7">
    <property type="method" value="X-ray"/>
    <property type="resolution" value="2.00 A"/>
    <property type="chains" value="I/W=1-205"/>
</dbReference>
<dbReference type="PDB" id="5LN3">
    <property type="method" value="EM"/>
    <property type="resolution" value="6.80 A"/>
    <property type="chains" value="3=1-205"/>
</dbReference>
<dbReference type="PDB" id="5M32">
    <property type="method" value="EM"/>
    <property type="resolution" value="3.80 A"/>
    <property type="chains" value="I/W=1-205"/>
</dbReference>
<dbReference type="PDB" id="5T0C">
    <property type="method" value="EM"/>
    <property type="resolution" value="3.80 A"/>
    <property type="chains" value="AP/BP=2-205"/>
</dbReference>
<dbReference type="PDB" id="5T0G">
    <property type="method" value="EM"/>
    <property type="resolution" value="4.40 A"/>
    <property type="chains" value="P=2-205"/>
</dbReference>
<dbReference type="PDB" id="5T0H">
    <property type="method" value="EM"/>
    <property type="resolution" value="6.80 A"/>
    <property type="chains" value="P=2-205"/>
</dbReference>
<dbReference type="PDB" id="5T0I">
    <property type="method" value="EM"/>
    <property type="resolution" value="8.00 A"/>
    <property type="chains" value="P=2-205"/>
</dbReference>
<dbReference type="PDB" id="5T0J">
    <property type="method" value="EM"/>
    <property type="resolution" value="8.00 A"/>
    <property type="chains" value="P=2-205"/>
</dbReference>
<dbReference type="PDB" id="5VFO">
    <property type="method" value="EM"/>
    <property type="resolution" value="3.50 A"/>
    <property type="chains" value="P/p=2-205"/>
</dbReference>
<dbReference type="PDB" id="5VFP">
    <property type="method" value="EM"/>
    <property type="resolution" value="4.20 A"/>
    <property type="chains" value="P/p=2-205"/>
</dbReference>
<dbReference type="PDB" id="5VFQ">
    <property type="method" value="EM"/>
    <property type="resolution" value="4.20 A"/>
    <property type="chains" value="P/p=2-205"/>
</dbReference>
<dbReference type="PDB" id="5VFR">
    <property type="method" value="EM"/>
    <property type="resolution" value="4.90 A"/>
    <property type="chains" value="P/p=2-205"/>
</dbReference>
<dbReference type="PDB" id="5VFS">
    <property type="method" value="EM"/>
    <property type="resolution" value="3.60 A"/>
    <property type="chains" value="P/p=2-205"/>
</dbReference>
<dbReference type="PDB" id="5VFT">
    <property type="method" value="EM"/>
    <property type="resolution" value="7.00 A"/>
    <property type="chains" value="P/p=2-205"/>
</dbReference>
<dbReference type="PDB" id="5VFU">
    <property type="method" value="EM"/>
    <property type="resolution" value="5.80 A"/>
    <property type="chains" value="P/p=2-205"/>
</dbReference>
<dbReference type="PDB" id="6AVO">
    <property type="method" value="EM"/>
    <property type="resolution" value="3.80 A"/>
    <property type="chains" value="U/Y=1-205"/>
</dbReference>
<dbReference type="PDB" id="6E5B">
    <property type="method" value="X-ray"/>
    <property type="resolution" value="2.77 A"/>
    <property type="chains" value="I/W=1-205"/>
</dbReference>
<dbReference type="PDB" id="6KWY">
    <property type="method" value="EM"/>
    <property type="resolution" value="2.72 A"/>
    <property type="chains" value="I/W=1-205"/>
</dbReference>
<dbReference type="PDB" id="6MSB">
    <property type="method" value="EM"/>
    <property type="resolution" value="3.00 A"/>
    <property type="chains" value="P/p=2-205"/>
</dbReference>
<dbReference type="PDB" id="6MSD">
    <property type="method" value="EM"/>
    <property type="resolution" value="3.20 A"/>
    <property type="chains" value="P/p=2-205"/>
</dbReference>
<dbReference type="PDB" id="6MSE">
    <property type="method" value="EM"/>
    <property type="resolution" value="3.30 A"/>
    <property type="chains" value="d=142-193"/>
</dbReference>
<dbReference type="PDB" id="6MSG">
    <property type="method" value="EM"/>
    <property type="resolution" value="3.50 A"/>
    <property type="chains" value="P/p=2-205"/>
</dbReference>
<dbReference type="PDB" id="6MSH">
    <property type="method" value="EM"/>
    <property type="resolution" value="3.60 A"/>
    <property type="chains" value="P/p=2-205"/>
</dbReference>
<dbReference type="PDB" id="6MSJ">
    <property type="method" value="EM"/>
    <property type="resolution" value="3.30 A"/>
    <property type="chains" value="P/p=2-205"/>
</dbReference>
<dbReference type="PDB" id="6MSK">
    <property type="method" value="EM"/>
    <property type="resolution" value="3.20 A"/>
    <property type="chains" value="P/p=2-205"/>
</dbReference>
<dbReference type="PDB" id="6R70">
    <property type="method" value="EM"/>
    <property type="resolution" value="3.50 A"/>
    <property type="chains" value="I/W=2-205"/>
</dbReference>
<dbReference type="PDB" id="6REY">
    <property type="method" value="EM"/>
    <property type="resolution" value="3.00 A"/>
    <property type="chains" value="J/X=1-205"/>
</dbReference>
<dbReference type="PDB" id="6RGQ">
    <property type="method" value="EM"/>
    <property type="resolution" value="2.60 A"/>
    <property type="chains" value="J/X=1-205"/>
</dbReference>
<dbReference type="PDB" id="6WJD">
    <property type="method" value="EM"/>
    <property type="resolution" value="4.80 A"/>
    <property type="chains" value="P/p=2-205"/>
</dbReference>
<dbReference type="PDB" id="6WJN">
    <property type="method" value="EM"/>
    <property type="resolution" value="5.70 A"/>
    <property type="chains" value="P/p=2-205"/>
</dbReference>
<dbReference type="PDB" id="6XMJ">
    <property type="method" value="EM"/>
    <property type="resolution" value="3.00 A"/>
    <property type="chains" value="J=2-205"/>
</dbReference>
<dbReference type="PDB" id="7AWE">
    <property type="method" value="X-ray"/>
    <property type="resolution" value="2.29 A"/>
    <property type="chains" value="J/X=2-205"/>
</dbReference>
<dbReference type="PDB" id="7B12">
    <property type="method" value="X-ray"/>
    <property type="resolution" value="2.43 A"/>
    <property type="chains" value="J/X=2-205"/>
</dbReference>
<dbReference type="PDB" id="7LXV">
    <property type="method" value="EM"/>
    <property type="resolution" value="3.40 A"/>
    <property type="chains" value="I/W=1-205"/>
</dbReference>
<dbReference type="PDB" id="7NAN">
    <property type="method" value="EM"/>
    <property type="resolution" value="2.80 A"/>
    <property type="chains" value="I/W=1-205"/>
</dbReference>
<dbReference type="PDB" id="7NAO">
    <property type="method" value="EM"/>
    <property type="resolution" value="2.90 A"/>
    <property type="chains" value="I/W=1-205"/>
</dbReference>
<dbReference type="PDB" id="7NAP">
    <property type="method" value="EM"/>
    <property type="resolution" value="3.20 A"/>
    <property type="chains" value="I/W=1-205"/>
</dbReference>
<dbReference type="PDB" id="7NAQ">
    <property type="method" value="EM"/>
    <property type="resolution" value="3.20 A"/>
    <property type="chains" value="I/W=1-205"/>
</dbReference>
<dbReference type="PDB" id="7NHT">
    <property type="method" value="EM"/>
    <property type="resolution" value="2.80 A"/>
    <property type="chains" value="I=1-205"/>
</dbReference>
<dbReference type="PDB" id="7PG9">
    <property type="method" value="EM"/>
    <property type="resolution" value="3.70 A"/>
    <property type="chains" value="J/X=1-205"/>
</dbReference>
<dbReference type="PDB" id="7QXN">
    <property type="method" value="EM"/>
    <property type="resolution" value="3.70 A"/>
    <property type="chains" value="P/p=2-205"/>
</dbReference>
<dbReference type="PDB" id="7QXP">
    <property type="method" value="EM"/>
    <property type="resolution" value="3.60 A"/>
    <property type="chains" value="P/p=2-205"/>
</dbReference>
<dbReference type="PDB" id="7QXU">
    <property type="method" value="EM"/>
    <property type="resolution" value="4.30 A"/>
    <property type="chains" value="P/p=2-205"/>
</dbReference>
<dbReference type="PDB" id="7QXW">
    <property type="method" value="EM"/>
    <property type="resolution" value="4.10 A"/>
    <property type="chains" value="P/p=2-205"/>
</dbReference>
<dbReference type="PDB" id="7QXX">
    <property type="method" value="EM"/>
    <property type="resolution" value="4.40 A"/>
    <property type="chains" value="P/p=2-205"/>
</dbReference>
<dbReference type="PDB" id="7QY7">
    <property type="method" value="EM"/>
    <property type="resolution" value="4.70 A"/>
    <property type="chains" value="P/p=2-205"/>
</dbReference>
<dbReference type="PDB" id="7QYA">
    <property type="method" value="EM"/>
    <property type="resolution" value="4.80 A"/>
    <property type="chains" value="P/p=2-205"/>
</dbReference>
<dbReference type="PDB" id="7QYB">
    <property type="method" value="EM"/>
    <property type="resolution" value="4.10 A"/>
    <property type="chains" value="P/p=2-205"/>
</dbReference>
<dbReference type="PDB" id="7V5G">
    <property type="method" value="EM"/>
    <property type="resolution" value="4.47 A"/>
    <property type="chains" value="C/J=1-205"/>
</dbReference>
<dbReference type="PDB" id="7V5M">
    <property type="method" value="EM"/>
    <property type="resolution" value="3.88 A"/>
    <property type="chains" value="J/X=1-205"/>
</dbReference>
<dbReference type="PDB" id="7W37">
    <property type="method" value="EM"/>
    <property type="resolution" value="3.00 A"/>
    <property type="chains" value="P/p=1-205"/>
</dbReference>
<dbReference type="PDB" id="7W38">
    <property type="method" value="EM"/>
    <property type="resolution" value="3.10 A"/>
    <property type="chains" value="P/p=1-205"/>
</dbReference>
<dbReference type="PDB" id="7W39">
    <property type="method" value="EM"/>
    <property type="resolution" value="3.20 A"/>
    <property type="chains" value="P/p=1-205"/>
</dbReference>
<dbReference type="PDB" id="7W3A">
    <property type="method" value="EM"/>
    <property type="resolution" value="3.50 A"/>
    <property type="chains" value="P/p=1-205"/>
</dbReference>
<dbReference type="PDB" id="7W3B">
    <property type="method" value="EM"/>
    <property type="resolution" value="3.60 A"/>
    <property type="chains" value="P/p=1-205"/>
</dbReference>
<dbReference type="PDB" id="7W3C">
    <property type="method" value="EM"/>
    <property type="resolution" value="3.40 A"/>
    <property type="chains" value="P/p=1-205"/>
</dbReference>
<dbReference type="PDB" id="7W3F">
    <property type="method" value="EM"/>
    <property type="resolution" value="3.30 A"/>
    <property type="chains" value="P/p=1-205"/>
</dbReference>
<dbReference type="PDB" id="7W3G">
    <property type="method" value="EM"/>
    <property type="resolution" value="3.20 A"/>
    <property type="chains" value="P/p=1-205"/>
</dbReference>
<dbReference type="PDB" id="7W3H">
    <property type="method" value="EM"/>
    <property type="resolution" value="3.20 A"/>
    <property type="chains" value="P/p=1-205"/>
</dbReference>
<dbReference type="PDB" id="7W3I">
    <property type="method" value="EM"/>
    <property type="resolution" value="3.50 A"/>
    <property type="chains" value="P/p=1-205"/>
</dbReference>
<dbReference type="PDB" id="7W3J">
    <property type="method" value="EM"/>
    <property type="resolution" value="3.50 A"/>
    <property type="chains" value="P/p=1-205"/>
</dbReference>
<dbReference type="PDB" id="7W3K">
    <property type="method" value="EM"/>
    <property type="resolution" value="3.60 A"/>
    <property type="chains" value="P/p=1-205"/>
</dbReference>
<dbReference type="PDB" id="7W3M">
    <property type="method" value="EM"/>
    <property type="resolution" value="3.50 A"/>
    <property type="chains" value="P/p=1-205"/>
</dbReference>
<dbReference type="PDB" id="8BZL">
    <property type="method" value="X-ray"/>
    <property type="resolution" value="2.14 A"/>
    <property type="chains" value="3/I=1-205"/>
</dbReference>
<dbReference type="PDB" id="8CVR">
    <property type="method" value="EM"/>
    <property type="resolution" value="2.70 A"/>
    <property type="chains" value="J/X=1-205"/>
</dbReference>
<dbReference type="PDB" id="8CVS">
    <property type="method" value="EM"/>
    <property type="resolution" value="3.10 A"/>
    <property type="chains" value="I/W=1-205"/>
</dbReference>
<dbReference type="PDB" id="8CVT">
    <property type="method" value="EM"/>
    <property type="resolution" value="3.00 A"/>
    <property type="chains" value="P/p=1-205"/>
</dbReference>
<dbReference type="PDB" id="8CXB">
    <property type="method" value="EM"/>
    <property type="resolution" value="2.90 A"/>
    <property type="chains" value="I/W=1-205"/>
</dbReference>
<dbReference type="PDB" id="8QYL">
    <property type="method" value="EM"/>
    <property type="resolution" value="2.67 A"/>
    <property type="chains" value="L=1-205"/>
</dbReference>
<dbReference type="PDB" id="8QYM">
    <property type="method" value="EM"/>
    <property type="resolution" value="2.73 A"/>
    <property type="chains" value="L=1-205"/>
</dbReference>
<dbReference type="PDB" id="8QYN">
    <property type="method" value="EM"/>
    <property type="resolution" value="2.88 A"/>
    <property type="chains" value="L=1-205"/>
</dbReference>
<dbReference type="PDB" id="8QYO">
    <property type="method" value="EM"/>
    <property type="resolution" value="2.84 A"/>
    <property type="chains" value="I/W=1-205"/>
</dbReference>
<dbReference type="PDB" id="8QYS">
    <property type="method" value="EM"/>
    <property type="resolution" value="3.89 A"/>
    <property type="chains" value="L/c=3-205"/>
</dbReference>
<dbReference type="PDB" id="8QZ9">
    <property type="method" value="EM"/>
    <property type="resolution" value="2.95 A"/>
    <property type="chains" value="L=1-205"/>
</dbReference>
<dbReference type="PDB" id="8TM4">
    <property type="method" value="EM"/>
    <property type="resolution" value="3.00 A"/>
    <property type="chains" value="I=1-205"/>
</dbReference>
<dbReference type="PDB" id="8TM5">
    <property type="method" value="EM"/>
    <property type="resolution" value="3.00 A"/>
    <property type="chains" value="I=1-205"/>
</dbReference>
<dbReference type="PDB" id="8TM6">
    <property type="method" value="EM"/>
    <property type="resolution" value="2.80 A"/>
    <property type="chains" value="I/W=1-205"/>
</dbReference>
<dbReference type="PDB" id="8UD9">
    <property type="method" value="EM"/>
    <property type="resolution" value="2.04 A"/>
    <property type="chains" value="J/X=1-205"/>
</dbReference>
<dbReference type="PDB" id="8YIX">
    <property type="method" value="EM"/>
    <property type="resolution" value="2.91 A"/>
    <property type="chains" value="I=1-205"/>
</dbReference>
<dbReference type="PDB" id="8YIY">
    <property type="method" value="EM"/>
    <property type="resolution" value="3.41 A"/>
    <property type="chains" value="I/W=1-205"/>
</dbReference>
<dbReference type="PDB" id="8YIZ">
    <property type="method" value="EM"/>
    <property type="resolution" value="3.79 A"/>
    <property type="chains" value="I/W=1-205"/>
</dbReference>
<dbReference type="PDB" id="9E8G">
    <property type="method" value="EM"/>
    <property type="resolution" value="3.01 A"/>
    <property type="chains" value="Q=1-205"/>
</dbReference>
<dbReference type="PDB" id="9E8O">
    <property type="method" value="EM"/>
    <property type="resolution" value="3.10 A"/>
    <property type="chains" value="P=1-205"/>
</dbReference>
<dbReference type="PDB" id="9E8Q">
    <property type="method" value="EM"/>
    <property type="resolution" value="3.16 A"/>
    <property type="chains" value="P=1-205"/>
</dbReference>
<dbReference type="PDB" id="9HMN">
    <property type="method" value="EM"/>
    <property type="resolution" value="2.55 A"/>
    <property type="chains" value="J/U=2-205"/>
</dbReference>
<dbReference type="PDBsum" id="4R3O"/>
<dbReference type="PDBsum" id="4R67"/>
<dbReference type="PDBsum" id="5A0Q"/>
<dbReference type="PDBsum" id="5GJQ"/>
<dbReference type="PDBsum" id="5GJR"/>
<dbReference type="PDBsum" id="5L4G"/>
<dbReference type="PDBsum" id="5LE5"/>
<dbReference type="PDBsum" id="5LEX"/>
<dbReference type="PDBsum" id="5LEY"/>
<dbReference type="PDBsum" id="5LEZ"/>
<dbReference type="PDBsum" id="5LF0"/>
<dbReference type="PDBsum" id="5LF1"/>
<dbReference type="PDBsum" id="5LF3"/>
<dbReference type="PDBsum" id="5LF4"/>
<dbReference type="PDBsum" id="5LF6"/>
<dbReference type="PDBsum" id="5LF7"/>
<dbReference type="PDBsum" id="5LN3"/>
<dbReference type="PDBsum" id="5M32"/>
<dbReference type="PDBsum" id="5T0C"/>
<dbReference type="PDBsum" id="5T0G"/>
<dbReference type="PDBsum" id="5T0H"/>
<dbReference type="PDBsum" id="5T0I"/>
<dbReference type="PDBsum" id="5T0J"/>
<dbReference type="PDBsum" id="5VFO"/>
<dbReference type="PDBsum" id="5VFP"/>
<dbReference type="PDBsum" id="5VFQ"/>
<dbReference type="PDBsum" id="5VFR"/>
<dbReference type="PDBsum" id="5VFS"/>
<dbReference type="PDBsum" id="5VFT"/>
<dbReference type="PDBsum" id="5VFU"/>
<dbReference type="PDBsum" id="6AVO"/>
<dbReference type="PDBsum" id="6E5B"/>
<dbReference type="PDBsum" id="6KWY"/>
<dbReference type="PDBsum" id="6MSB"/>
<dbReference type="PDBsum" id="6MSD"/>
<dbReference type="PDBsum" id="6MSE"/>
<dbReference type="PDBsum" id="6MSG"/>
<dbReference type="PDBsum" id="6MSH"/>
<dbReference type="PDBsum" id="6MSJ"/>
<dbReference type="PDBsum" id="6MSK"/>
<dbReference type="PDBsum" id="6R70"/>
<dbReference type="PDBsum" id="6REY"/>
<dbReference type="PDBsum" id="6RGQ"/>
<dbReference type="PDBsum" id="6WJD"/>
<dbReference type="PDBsum" id="6WJN"/>
<dbReference type="PDBsum" id="6XMJ"/>
<dbReference type="PDBsum" id="7AWE"/>
<dbReference type="PDBsum" id="7B12"/>
<dbReference type="PDBsum" id="7LXV"/>
<dbReference type="PDBsum" id="7NAN"/>
<dbReference type="PDBsum" id="7NAO"/>
<dbReference type="PDBsum" id="7NAP"/>
<dbReference type="PDBsum" id="7NAQ"/>
<dbReference type="PDBsum" id="7NHT"/>
<dbReference type="PDBsum" id="7PG9"/>
<dbReference type="PDBsum" id="7QXN"/>
<dbReference type="PDBsum" id="7QXP"/>
<dbReference type="PDBsum" id="7QXU"/>
<dbReference type="PDBsum" id="7QXW"/>
<dbReference type="PDBsum" id="7QXX"/>
<dbReference type="PDBsum" id="7QY7"/>
<dbReference type="PDBsum" id="7QYA"/>
<dbReference type="PDBsum" id="7QYB"/>
<dbReference type="PDBsum" id="7V5G"/>
<dbReference type="PDBsum" id="7V5M"/>
<dbReference type="PDBsum" id="7W37"/>
<dbReference type="PDBsum" id="7W38"/>
<dbReference type="PDBsum" id="7W39"/>
<dbReference type="PDBsum" id="7W3A"/>
<dbReference type="PDBsum" id="7W3B"/>
<dbReference type="PDBsum" id="7W3C"/>
<dbReference type="PDBsum" id="7W3F"/>
<dbReference type="PDBsum" id="7W3G"/>
<dbReference type="PDBsum" id="7W3H"/>
<dbReference type="PDBsum" id="7W3I"/>
<dbReference type="PDBsum" id="7W3J"/>
<dbReference type="PDBsum" id="7W3K"/>
<dbReference type="PDBsum" id="7W3M"/>
<dbReference type="PDBsum" id="8BZL"/>
<dbReference type="PDBsum" id="8CVR"/>
<dbReference type="PDBsum" id="8CVS"/>
<dbReference type="PDBsum" id="8CVT"/>
<dbReference type="PDBsum" id="8CXB"/>
<dbReference type="PDBsum" id="8QYL"/>
<dbReference type="PDBsum" id="8QYM"/>
<dbReference type="PDBsum" id="8QYN"/>
<dbReference type="PDBsum" id="8QYO"/>
<dbReference type="PDBsum" id="8QYS"/>
<dbReference type="PDBsum" id="8QZ9"/>
<dbReference type="PDBsum" id="8TM4"/>
<dbReference type="PDBsum" id="8TM5"/>
<dbReference type="PDBsum" id="8TM6"/>
<dbReference type="PDBsum" id="8UD9"/>
<dbReference type="PDBsum" id="8YIX"/>
<dbReference type="PDBsum" id="8YIY"/>
<dbReference type="PDBsum" id="8YIZ"/>
<dbReference type="PDBsum" id="9E8G"/>
<dbReference type="PDBsum" id="9E8O"/>
<dbReference type="PDBsum" id="9E8Q"/>
<dbReference type="PDBsum" id="9HMN"/>
<dbReference type="EMDB" id="EMD-0781"/>
<dbReference type="EMDB" id="EMD-12341"/>
<dbReference type="EMDB" id="EMD-13389"/>
<dbReference type="EMDB" id="EMD-14201"/>
<dbReference type="EMDB" id="EMD-14202"/>
<dbReference type="EMDB" id="EMD-14203"/>
<dbReference type="EMDB" id="EMD-14204"/>
<dbReference type="EMDB" id="EMD-14205"/>
<dbReference type="EMDB" id="EMD-14209"/>
<dbReference type="EMDB" id="EMD-14210"/>
<dbReference type="EMDB" id="EMD-14211"/>
<dbReference type="EMDB" id="EMD-18757"/>
<dbReference type="EMDB" id="EMD-18758"/>
<dbReference type="EMDB" id="EMD-18759"/>
<dbReference type="EMDB" id="EMD-18760"/>
<dbReference type="EMDB" id="EMD-18761"/>
<dbReference type="EMDB" id="EMD-18773"/>
<dbReference type="EMDB" id="EMD-21691"/>
<dbReference type="EMDB" id="EMD-21696"/>
<dbReference type="EMDB" id="EMD-22259"/>
<dbReference type="EMDB" id="EMD-23576"/>
<dbReference type="EMDB" id="EMD-24275"/>
<dbReference type="EMDB" id="EMD-24276"/>
<dbReference type="EMDB" id="EMD-24277"/>
<dbReference type="EMDB" id="EMD-24278"/>
<dbReference type="EMDB" id="EMD-27013"/>
<dbReference type="EMDB" id="EMD-27015"/>
<dbReference type="EMDB" id="EMD-27018"/>
<dbReference type="EMDB" id="EMD-2981"/>
<dbReference type="EMDB" id="EMD-31724"/>
<dbReference type="EMDB" id="EMD-31727"/>
<dbReference type="EMDB" id="EMD-32272"/>
<dbReference type="EMDB" id="EMD-32273"/>
<dbReference type="EMDB" id="EMD-32274"/>
<dbReference type="EMDB" id="EMD-32275"/>
<dbReference type="EMDB" id="EMD-32276"/>
<dbReference type="EMDB" id="EMD-32277"/>
<dbReference type="EMDB" id="EMD-32278"/>
<dbReference type="EMDB" id="EMD-32279"/>
<dbReference type="EMDB" id="EMD-32280"/>
<dbReference type="EMDB" id="EMD-32281"/>
<dbReference type="EMDB" id="EMD-32282"/>
<dbReference type="EMDB" id="EMD-32283"/>
<dbReference type="EMDB" id="EMD-32284"/>
<dbReference type="EMDB" id="EMD-39332"/>
<dbReference type="EMDB" id="EMD-39333"/>
<dbReference type="EMDB" id="EMD-39334"/>
<dbReference type="EMDB" id="EMD-4089"/>
<dbReference type="EMDB" id="EMD-41378"/>
<dbReference type="EMDB" id="EMD-41379"/>
<dbReference type="EMDB" id="EMD-41380"/>
<dbReference type="EMDB" id="EMD-42148"/>
<dbReference type="EMDB" id="EMD-4738"/>
<dbReference type="EMDB" id="EMD-47719"/>
<dbReference type="EMDB" id="EMD-47726"/>
<dbReference type="EMDB" id="EMD-47727"/>
<dbReference type="EMDB" id="EMD-4860"/>
<dbReference type="EMDB" id="EMD-4877"/>
<dbReference type="EMDB" id="EMD-52296"/>
<dbReference type="EMDB" id="EMD-60138"/>
<dbReference type="EMDB" id="EMD-60139"/>
<dbReference type="EMDB" id="EMD-7010"/>
<dbReference type="EMDB" id="EMD-8662"/>
<dbReference type="EMDB" id="EMD-8663"/>
<dbReference type="EMDB" id="EMD-8664"/>
<dbReference type="EMDB" id="EMD-8665"/>
<dbReference type="EMDB" id="EMD-8666"/>
<dbReference type="EMDB" id="EMD-8667"/>
<dbReference type="EMDB" id="EMD-8668"/>
<dbReference type="EMDB" id="EMD-9216"/>
<dbReference type="EMDB" id="EMD-9217"/>
<dbReference type="EMDB" id="EMD-9218"/>
<dbReference type="EMDB" id="EMD-9219"/>
<dbReference type="EMDB" id="EMD-9220"/>
<dbReference type="EMDB" id="EMD-9221"/>
<dbReference type="EMDB" id="EMD-9222"/>
<dbReference type="EMDB" id="EMD-9512"/>
<dbReference type="SMR" id="P49720"/>
<dbReference type="BioGRID" id="111664">
    <property type="interactions" value="205"/>
</dbReference>
<dbReference type="ComplexPortal" id="CPX-5993">
    <property type="entry name" value="26S proteasome complex"/>
</dbReference>
<dbReference type="ComplexPortal" id="CPX-8806">
    <property type="entry name" value="20S proteasome complex"/>
</dbReference>
<dbReference type="ComplexPortal" id="CPX-8841">
    <property type="entry name" value="PA200-20S single-capped proteasome"/>
</dbReference>
<dbReference type="ComplexPortal" id="CPX-8842">
    <property type="entry name" value="PA28-alphabeta double-capped 20S proteasome complex"/>
</dbReference>
<dbReference type="ComplexPortal" id="CPX-9001">
    <property type="entry name" value="PA28-gamma single-capped 20S proteasome complex"/>
</dbReference>
<dbReference type="ComplexPortal" id="CPX-9002">
    <property type="entry name" value="PA28-alphabeta single-capped 20S proteasome complex"/>
</dbReference>
<dbReference type="ComplexPortal" id="CPX-9003">
    <property type="entry name" value="20S immunoproteasome complex"/>
</dbReference>
<dbReference type="ComplexPortal" id="CPX-9004">
    <property type="entry name" value="20S thymoproteasome complex"/>
</dbReference>
<dbReference type="ComplexPortal" id="CPX-9021">
    <property type="entry name" value="20S spermatoproteasome complex"/>
</dbReference>
<dbReference type="ComplexPortal" id="CPX-9022">
    <property type="entry name" value="PA28-gamma double-capped 20S proteasome complex"/>
</dbReference>
<dbReference type="ComplexPortal" id="CPX-9063">
    <property type="entry name" value="PA200-20S-PA200 double-capped proteasome complex"/>
</dbReference>
<dbReference type="ComplexPortal" id="CPX-9082">
    <property type="entry name" value="19S-20S-PA28-alphabeta hybrid proteasome complex"/>
</dbReference>
<dbReference type="ComplexPortal" id="CPX-9085">
    <property type="entry name" value="19S-20S-PA28-gamma hybrid proteasome complex"/>
</dbReference>
<dbReference type="ComplexPortal" id="CPX-9086">
    <property type="entry name" value="30S proteasome complex"/>
</dbReference>
<dbReference type="CORUM" id="P49720"/>
<dbReference type="DIP" id="DIP-33846N"/>
<dbReference type="FunCoup" id="P49720">
    <property type="interactions" value="2345"/>
</dbReference>
<dbReference type="IntAct" id="P49720">
    <property type="interactions" value="106"/>
</dbReference>
<dbReference type="MINT" id="P49720"/>
<dbReference type="STRING" id="9606.ENSP00000483688"/>
<dbReference type="BindingDB" id="P49720"/>
<dbReference type="ChEMBL" id="CHEMBL3308923"/>
<dbReference type="DrugBank" id="DB08515">
    <property type="generic name" value="(3AR,6R,6AS)-6-((S)-((S)-CYCLOHEX-2-ENYL)(HYDROXY)METHYL)-6A-METHYL-4-OXO-HEXAHYDRO-2H-FURO[3,2-C]PYRROLE-6-CARBALDEHYDE"/>
</dbReference>
<dbReference type="MEROPS" id="T01.983"/>
<dbReference type="GlyGen" id="P49720">
    <property type="glycosylation" value="1 site, 1 O-linked glycan (1 site)"/>
</dbReference>
<dbReference type="iPTMnet" id="P49720"/>
<dbReference type="MetOSite" id="P49720"/>
<dbReference type="PhosphoSitePlus" id="P49720"/>
<dbReference type="SwissPalm" id="P49720"/>
<dbReference type="BioMuta" id="PSMB3"/>
<dbReference type="DMDM" id="20532411"/>
<dbReference type="OGP" id="P49720"/>
<dbReference type="REPRODUCTION-2DPAGE" id="IPI00028004"/>
<dbReference type="jPOST" id="P49720"/>
<dbReference type="MassIVE" id="P49720"/>
<dbReference type="PaxDb" id="9606-ENSP00000483688"/>
<dbReference type="PeptideAtlas" id="P49720"/>
<dbReference type="ProteomicsDB" id="56056"/>
<dbReference type="Pumba" id="P49720"/>
<dbReference type="TopDownProteomics" id="P49720"/>
<dbReference type="Antibodypedia" id="73543">
    <property type="antibodies" value="134 antibodies from 31 providers"/>
</dbReference>
<dbReference type="DNASU" id="5691"/>
<dbReference type="Ensembl" id="ENST00000619426.5">
    <property type="protein sequence ID" value="ENSP00000483688.1"/>
    <property type="gene ID" value="ENSG00000277791.5"/>
</dbReference>
<dbReference type="Ensembl" id="ENST00000619951.2">
    <property type="protein sequence ID" value="ENSP00000483956.1"/>
    <property type="gene ID" value="ENSG00000275903.2"/>
</dbReference>
<dbReference type="GeneID" id="5691"/>
<dbReference type="KEGG" id="hsa:5691"/>
<dbReference type="MANE-Select" id="ENST00000619426.5">
    <property type="protein sequence ID" value="ENSP00000483688.1"/>
    <property type="RefSeq nucleotide sequence ID" value="NM_002795.4"/>
    <property type="RefSeq protein sequence ID" value="NP_002786.2"/>
</dbReference>
<dbReference type="UCSC" id="uc002hqr.5">
    <property type="organism name" value="human"/>
</dbReference>
<dbReference type="AGR" id="HGNC:9540"/>
<dbReference type="CTD" id="5691"/>
<dbReference type="DisGeNET" id="5691"/>
<dbReference type="GeneCards" id="PSMB3"/>
<dbReference type="HGNC" id="HGNC:9540">
    <property type="gene designation" value="PSMB3"/>
</dbReference>
<dbReference type="HPA" id="ENSG00000277791">
    <property type="expression patterns" value="Low tissue specificity"/>
</dbReference>
<dbReference type="MIM" id="602176">
    <property type="type" value="gene"/>
</dbReference>
<dbReference type="neXtProt" id="NX_P49720"/>
<dbReference type="OpenTargets" id="ENSG00000277791"/>
<dbReference type="PharmGKB" id="PA33885"/>
<dbReference type="VEuPathDB" id="HostDB:ENSG00000277791"/>
<dbReference type="eggNOG" id="KOG0180">
    <property type="taxonomic scope" value="Eukaryota"/>
</dbReference>
<dbReference type="GeneTree" id="ENSGT00550000074820"/>
<dbReference type="HOGENOM" id="CLU_035750_10_0_1"/>
<dbReference type="InParanoid" id="P49720"/>
<dbReference type="OMA" id="CSEQLYG"/>
<dbReference type="OrthoDB" id="204949at2759"/>
<dbReference type="PAN-GO" id="P49720">
    <property type="GO annotations" value="4 GO annotations based on evolutionary models"/>
</dbReference>
<dbReference type="PhylomeDB" id="P49720"/>
<dbReference type="TreeFam" id="TF106216"/>
<dbReference type="PathwayCommons" id="P49720"/>
<dbReference type="Reactome" id="R-HSA-1169091">
    <property type="pathway name" value="Activation of NF-kappaB in B cells"/>
</dbReference>
<dbReference type="Reactome" id="R-HSA-1234176">
    <property type="pathway name" value="Oxygen-dependent proline hydroxylation of Hypoxia-inducible Factor Alpha"/>
</dbReference>
<dbReference type="Reactome" id="R-HSA-1236974">
    <property type="pathway name" value="ER-Phagosome pathway"/>
</dbReference>
<dbReference type="Reactome" id="R-HSA-1236978">
    <property type="pathway name" value="Cross-presentation of soluble exogenous antigens (endosomes)"/>
</dbReference>
<dbReference type="Reactome" id="R-HSA-174084">
    <property type="pathway name" value="Autodegradation of Cdh1 by Cdh1:APC/C"/>
</dbReference>
<dbReference type="Reactome" id="R-HSA-174113">
    <property type="pathway name" value="SCF-beta-TrCP mediated degradation of Emi1"/>
</dbReference>
<dbReference type="Reactome" id="R-HSA-174154">
    <property type="pathway name" value="APC/C:Cdc20 mediated degradation of Securin"/>
</dbReference>
<dbReference type="Reactome" id="R-HSA-174178">
    <property type="pathway name" value="APC/C:Cdh1 mediated degradation of Cdc20 and other APC/C:Cdh1 targeted proteins in late mitosis/early G1"/>
</dbReference>
<dbReference type="Reactome" id="R-HSA-174184">
    <property type="pathway name" value="Cdc20:Phospho-APC/C mediated degradation of Cyclin A"/>
</dbReference>
<dbReference type="Reactome" id="R-HSA-180534">
    <property type="pathway name" value="Vpu mediated degradation of CD4"/>
</dbReference>
<dbReference type="Reactome" id="R-HSA-180585">
    <property type="pathway name" value="Vif-mediated degradation of APOBEC3G"/>
</dbReference>
<dbReference type="Reactome" id="R-HSA-187577">
    <property type="pathway name" value="SCF(Skp2)-mediated degradation of p27/p21"/>
</dbReference>
<dbReference type="Reactome" id="R-HSA-195253">
    <property type="pathway name" value="Degradation of beta-catenin by the destruction complex"/>
</dbReference>
<dbReference type="Reactome" id="R-HSA-202424">
    <property type="pathway name" value="Downstream TCR signaling"/>
</dbReference>
<dbReference type="Reactome" id="R-HSA-211733">
    <property type="pathway name" value="Regulation of activated PAK-2p34 by proteasome mediated degradation"/>
</dbReference>
<dbReference type="Reactome" id="R-HSA-2467813">
    <property type="pathway name" value="Separation of Sister Chromatids"/>
</dbReference>
<dbReference type="Reactome" id="R-HSA-2871837">
    <property type="pathway name" value="FCERI mediated NF-kB activation"/>
</dbReference>
<dbReference type="Reactome" id="R-HSA-349425">
    <property type="pathway name" value="Autodegradation of the E3 ubiquitin ligase COP1"/>
</dbReference>
<dbReference type="Reactome" id="R-HSA-350562">
    <property type="pathway name" value="Regulation of ornithine decarboxylase (ODC)"/>
</dbReference>
<dbReference type="Reactome" id="R-HSA-382556">
    <property type="pathway name" value="ABC-family proteins mediated transport"/>
</dbReference>
<dbReference type="Reactome" id="R-HSA-450408">
    <property type="pathway name" value="AUF1 (hnRNP D0) binds and destabilizes mRNA"/>
</dbReference>
<dbReference type="Reactome" id="R-HSA-4608870">
    <property type="pathway name" value="Asymmetric localization of PCP proteins"/>
</dbReference>
<dbReference type="Reactome" id="R-HSA-4641257">
    <property type="pathway name" value="Degradation of AXIN"/>
</dbReference>
<dbReference type="Reactome" id="R-HSA-4641258">
    <property type="pathway name" value="Degradation of DVL"/>
</dbReference>
<dbReference type="Reactome" id="R-HSA-5358346">
    <property type="pathway name" value="Hedgehog ligand biogenesis"/>
</dbReference>
<dbReference type="Reactome" id="R-HSA-5362768">
    <property type="pathway name" value="Hh mutants are degraded by ERAD"/>
</dbReference>
<dbReference type="Reactome" id="R-HSA-5607761">
    <property type="pathway name" value="Dectin-1 mediated noncanonical NF-kB signaling"/>
</dbReference>
<dbReference type="Reactome" id="R-HSA-5607764">
    <property type="pathway name" value="CLEC7A (Dectin-1) signaling"/>
</dbReference>
<dbReference type="Reactome" id="R-HSA-5610780">
    <property type="pathway name" value="Degradation of GLI1 by the proteasome"/>
</dbReference>
<dbReference type="Reactome" id="R-HSA-5610783">
    <property type="pathway name" value="Degradation of GLI2 by the proteasome"/>
</dbReference>
<dbReference type="Reactome" id="R-HSA-5610785">
    <property type="pathway name" value="GLI3 is processed to GLI3R by the proteasome"/>
</dbReference>
<dbReference type="Reactome" id="R-HSA-5632684">
    <property type="pathway name" value="Hedgehog 'on' state"/>
</dbReference>
<dbReference type="Reactome" id="R-HSA-5658442">
    <property type="pathway name" value="Regulation of RAS by GAPs"/>
</dbReference>
<dbReference type="Reactome" id="R-HSA-5668541">
    <property type="pathway name" value="TNFR2 non-canonical NF-kB pathway"/>
</dbReference>
<dbReference type="Reactome" id="R-HSA-5676590">
    <property type="pathway name" value="NIK--&gt;noncanonical NF-kB signaling"/>
</dbReference>
<dbReference type="Reactome" id="R-HSA-5678895">
    <property type="pathway name" value="Defective CFTR causes cystic fibrosis"/>
</dbReference>
<dbReference type="Reactome" id="R-HSA-5687128">
    <property type="pathway name" value="MAPK6/MAPK4 signaling"/>
</dbReference>
<dbReference type="Reactome" id="R-HSA-5689603">
    <property type="pathway name" value="UCH proteinases"/>
</dbReference>
<dbReference type="Reactome" id="R-HSA-5689880">
    <property type="pathway name" value="Ub-specific processing proteases"/>
</dbReference>
<dbReference type="Reactome" id="R-HSA-68867">
    <property type="pathway name" value="Assembly of the pre-replicative complex"/>
</dbReference>
<dbReference type="Reactome" id="R-HSA-68949">
    <property type="pathway name" value="Orc1 removal from chromatin"/>
</dbReference>
<dbReference type="Reactome" id="R-HSA-69017">
    <property type="pathway name" value="CDK-mediated phosphorylation and removal of Cdc6"/>
</dbReference>
<dbReference type="Reactome" id="R-HSA-69481">
    <property type="pathway name" value="G2/M Checkpoints"/>
</dbReference>
<dbReference type="Reactome" id="R-HSA-69601">
    <property type="pathway name" value="Ubiquitin Mediated Degradation of Phosphorylated Cdc25A"/>
</dbReference>
<dbReference type="Reactome" id="R-HSA-75815">
    <property type="pathway name" value="Ubiquitin-dependent degradation of Cyclin D"/>
</dbReference>
<dbReference type="Reactome" id="R-HSA-8852276">
    <property type="pathway name" value="The role of GTSE1 in G2/M progression after G2 checkpoint"/>
</dbReference>
<dbReference type="Reactome" id="R-HSA-8854050">
    <property type="pathway name" value="FBXL7 down-regulates AURKA during mitotic entry and in early mitosis"/>
</dbReference>
<dbReference type="Reactome" id="R-HSA-8939236">
    <property type="pathway name" value="RUNX1 regulates transcription of genes involved in differentiation of HSCs"/>
</dbReference>
<dbReference type="Reactome" id="R-HSA-8939902">
    <property type="pathway name" value="Regulation of RUNX2 expression and activity"/>
</dbReference>
<dbReference type="Reactome" id="R-HSA-8941858">
    <property type="pathway name" value="Regulation of RUNX3 expression and activity"/>
</dbReference>
<dbReference type="Reactome" id="R-HSA-8948751">
    <property type="pathway name" value="Regulation of PTEN stability and activity"/>
</dbReference>
<dbReference type="Reactome" id="R-HSA-8951664">
    <property type="pathway name" value="Neddylation"/>
</dbReference>
<dbReference type="Reactome" id="R-HSA-9010553">
    <property type="pathway name" value="Regulation of expression of SLITs and ROBOs"/>
</dbReference>
<dbReference type="Reactome" id="R-HSA-9020702">
    <property type="pathway name" value="Interleukin-1 signaling"/>
</dbReference>
<dbReference type="Reactome" id="R-HSA-9604323">
    <property type="pathway name" value="Negative regulation of NOTCH4 signaling"/>
</dbReference>
<dbReference type="Reactome" id="R-HSA-9755511">
    <property type="pathway name" value="KEAP1-NFE2L2 pathway"/>
</dbReference>
<dbReference type="Reactome" id="R-HSA-9762114">
    <property type="pathway name" value="GSK3B and BTRC:CUL1-mediated-degradation of NFE2L2"/>
</dbReference>
<dbReference type="Reactome" id="R-HSA-9824272">
    <property type="pathway name" value="Somitogenesis"/>
</dbReference>
<dbReference type="Reactome" id="R-HSA-983168">
    <property type="pathway name" value="Antigen processing: Ubiquitination &amp; Proteasome degradation"/>
</dbReference>
<dbReference type="Reactome" id="R-HSA-9907900">
    <property type="pathway name" value="Proteasome assembly"/>
</dbReference>
<dbReference type="SignaLink" id="P49720"/>
<dbReference type="SIGNOR" id="P49720"/>
<dbReference type="BioGRID-ORCS" id="5691">
    <property type="hits" value="864 hits in 1144 CRISPR screens"/>
</dbReference>
<dbReference type="CD-CODE" id="91857CE7">
    <property type="entry name" value="Nucleolus"/>
</dbReference>
<dbReference type="ChiTaRS" id="PSMB3">
    <property type="organism name" value="human"/>
</dbReference>
<dbReference type="EvolutionaryTrace" id="P49720"/>
<dbReference type="GeneWiki" id="PSMB3"/>
<dbReference type="GenomeRNAi" id="5691"/>
<dbReference type="Pharos" id="P49720">
    <property type="development level" value="Tbio"/>
</dbReference>
<dbReference type="PRO" id="PR:P49720"/>
<dbReference type="Proteomes" id="UP000005640">
    <property type="component" value="Chromosome 17"/>
</dbReference>
<dbReference type="RNAct" id="P49720">
    <property type="molecule type" value="protein"/>
</dbReference>
<dbReference type="Bgee" id="ENSG00000277791">
    <property type="expression patterns" value="Expressed in monocyte and 100 other cell types or tissues"/>
</dbReference>
<dbReference type="ExpressionAtlas" id="P49720">
    <property type="expression patterns" value="baseline and differential"/>
</dbReference>
<dbReference type="GO" id="GO:0005737">
    <property type="term" value="C:cytoplasm"/>
    <property type="evidence" value="ECO:0000314"/>
    <property type="project" value="UniProtKB"/>
</dbReference>
<dbReference type="GO" id="GO:0005829">
    <property type="term" value="C:cytosol"/>
    <property type="evidence" value="ECO:0000318"/>
    <property type="project" value="GO_Central"/>
</dbReference>
<dbReference type="GO" id="GO:0070062">
    <property type="term" value="C:extracellular exosome"/>
    <property type="evidence" value="ECO:0007005"/>
    <property type="project" value="UniProtKB"/>
</dbReference>
<dbReference type="GO" id="GO:0005654">
    <property type="term" value="C:nucleoplasm"/>
    <property type="evidence" value="ECO:0000304"/>
    <property type="project" value="Reactome"/>
</dbReference>
<dbReference type="GO" id="GO:0005634">
    <property type="term" value="C:nucleus"/>
    <property type="evidence" value="ECO:0000314"/>
    <property type="project" value="UniProtKB"/>
</dbReference>
<dbReference type="GO" id="GO:0000502">
    <property type="term" value="C:proteasome complex"/>
    <property type="evidence" value="ECO:0000314"/>
    <property type="project" value="UniProtKB"/>
</dbReference>
<dbReference type="GO" id="GO:0005839">
    <property type="term" value="C:proteasome core complex"/>
    <property type="evidence" value="ECO:0000314"/>
    <property type="project" value="UniProtKB"/>
</dbReference>
<dbReference type="GO" id="GO:0019774">
    <property type="term" value="C:proteasome core complex, beta-subunit complex"/>
    <property type="evidence" value="ECO:0000250"/>
    <property type="project" value="UniProtKB"/>
</dbReference>
<dbReference type="GO" id="GO:0043161">
    <property type="term" value="P:proteasome-mediated ubiquitin-dependent protein catabolic process"/>
    <property type="evidence" value="ECO:0000318"/>
    <property type="project" value="GO_Central"/>
</dbReference>
<dbReference type="CDD" id="cd03759">
    <property type="entry name" value="proteasome_beta_type_3"/>
    <property type="match status" value="1"/>
</dbReference>
<dbReference type="FunFam" id="3.60.20.10:FF:000003">
    <property type="entry name" value="Proteasome subunit beta type-3"/>
    <property type="match status" value="1"/>
</dbReference>
<dbReference type="Gene3D" id="3.60.20.10">
    <property type="entry name" value="Glutamine Phosphoribosylpyrophosphate, subunit 1, domain 1"/>
    <property type="match status" value="1"/>
</dbReference>
<dbReference type="InterPro" id="IPR029055">
    <property type="entry name" value="Ntn_hydrolases_N"/>
</dbReference>
<dbReference type="InterPro" id="IPR033811">
    <property type="entry name" value="Proteasome_beta_3"/>
</dbReference>
<dbReference type="InterPro" id="IPR016050">
    <property type="entry name" value="Proteasome_bsu_CS"/>
</dbReference>
<dbReference type="InterPro" id="IPR001353">
    <property type="entry name" value="Proteasome_sua/b"/>
</dbReference>
<dbReference type="InterPro" id="IPR023333">
    <property type="entry name" value="Proteasome_suB-type"/>
</dbReference>
<dbReference type="PANTHER" id="PTHR32194">
    <property type="entry name" value="METALLOPROTEASE TLDD"/>
    <property type="match status" value="1"/>
</dbReference>
<dbReference type="PANTHER" id="PTHR32194:SF10">
    <property type="entry name" value="PROTEASOME SUBUNIT BETA TYPE-3"/>
    <property type="match status" value="1"/>
</dbReference>
<dbReference type="Pfam" id="PF00227">
    <property type="entry name" value="Proteasome"/>
    <property type="match status" value="1"/>
</dbReference>
<dbReference type="SUPFAM" id="SSF56235">
    <property type="entry name" value="N-terminal nucleophile aminohydrolases (Ntn hydrolases)"/>
    <property type="match status" value="1"/>
</dbReference>
<dbReference type="PROSITE" id="PS00854">
    <property type="entry name" value="PROTEASOME_BETA_1"/>
    <property type="match status" value="1"/>
</dbReference>
<dbReference type="PROSITE" id="PS51476">
    <property type="entry name" value="PROTEASOME_BETA_2"/>
    <property type="match status" value="1"/>
</dbReference>
<name>PSB3_HUMAN</name>
<comment type="function">
    <text evidence="4 8 14">Non-catalytic component of the 20S core proteasome complex involved in the proteolytic degradation of most intracellular proteins. This complex plays numerous essential roles within the cell by associating with different regulatory particles. Associated with two 19S regulatory particles, forms the 26S proteasome and thus participates in the ATP-dependent degradation of ubiquitinated proteins. The 26S proteasome plays a key role in the maintenance of protein homeostasis by removing misfolded or damaged proteins that could impair cellular functions, and by removing proteins whose functions are no longer required. Associated with the PA200 or PA28, the 20S proteasome mediates ubiquitin-independent protein degradation. This type of proteolysis is required in several pathways including spermatogenesis (20S-PA200 complex) or generation of a subset of MHC class I-presented antigenic peptides (20S-PA28 complex).</text>
</comment>
<comment type="subunit">
    <text evidence="3 6 7 9 10 11 12">The 26S proteasome consists of a 20S proteasome core and two 19S regulatory subunits. The 20S proteasome core is a barrel-shaped complex made of 28 subunits that are arranged in four stacked rings. The two outer rings are each formed by seven alpha subunits, and the two inner rings are formed by seven beta subunits. The proteolytic activity is exerted by three beta-subunits PSMB5, PSMB6 and PSMB7.</text>
</comment>
<comment type="subunit">
    <text evidence="3">(Microbial infection) Interacts with HIV-1 TAT protein.</text>
</comment>
<comment type="interaction">
    <interactant intactId="EBI-603340">
        <id>P49720</id>
    </interactant>
    <interactant intactId="EBI-11982645">
        <id>Q8N4Y2-3</id>
        <label>CRACR2B</label>
    </interactant>
    <organismsDiffer>false</organismsDiffer>
    <experiments>3</experiments>
</comment>
<comment type="interaction">
    <interactant intactId="EBI-603340">
        <id>P49720</id>
    </interactant>
    <interactant intactId="EBI-2339898">
        <id>Q9NW38</id>
        <label>FANCL</label>
    </interactant>
    <organismsDiffer>false</organismsDiffer>
    <experiments>3</experiments>
</comment>
<comment type="interaction">
    <interactant intactId="EBI-603340">
        <id>P49720</id>
    </interactant>
    <interactant intactId="EBI-466029">
        <id>P42858</id>
        <label>HTT</label>
    </interactant>
    <organismsDiffer>false</organismsDiffer>
    <experiments>3</experiments>
</comment>
<comment type="interaction">
    <interactant intactId="EBI-603340">
        <id>P49720</id>
    </interactant>
    <interactant intactId="EBI-696895">
        <id>Q9Y244</id>
        <label>POMP</label>
    </interactant>
    <organismsDiffer>false</organismsDiffer>
    <experiments>7</experiments>
</comment>
<comment type="interaction">
    <interactant intactId="EBI-603340">
        <id>P49720</id>
    </interactant>
    <interactant intactId="EBI-603272">
        <id>O14818</id>
        <label>PSMA7</label>
    </interactant>
    <organismsDiffer>false</organismsDiffer>
    <experiments>7</experiments>
</comment>
<comment type="interaction">
    <interactant intactId="EBI-603340">
        <id>P49720</id>
    </interactant>
    <interactant intactId="EBI-372273">
        <id>P20618</id>
        <label>PSMB1</label>
    </interactant>
    <organismsDiffer>false</organismsDiffer>
    <experiments>6</experiments>
</comment>
<comment type="interaction">
    <interactant intactId="EBI-603340">
        <id>P49720</id>
    </interactant>
    <interactant intactId="EBI-603329">
        <id>P40306</id>
        <label>PSMB10</label>
    </interactant>
    <organismsDiffer>false</organismsDiffer>
    <experiments>5</experiments>
</comment>
<comment type="interaction">
    <interactant intactId="EBI-603340">
        <id>P49720</id>
    </interactant>
    <interactant intactId="EBI-359335">
        <id>P49721</id>
        <label>PSMB2</label>
    </interactant>
    <organismsDiffer>false</organismsDiffer>
    <experiments>9</experiments>
</comment>
<comment type="interaction">
    <interactant intactId="EBI-603340">
        <id>P49720</id>
    </interactant>
    <interactant intactId="EBI-357828">
        <id>P28074</id>
        <label>PSMB5</label>
    </interactant>
    <organismsDiffer>false</organismsDiffer>
    <experiments>6</experiments>
</comment>
<comment type="interaction">
    <interactant intactId="EBI-603340">
        <id>P49720</id>
    </interactant>
    <interactant intactId="EBI-603319">
        <id>Q99436</id>
        <label>PSMB7</label>
    </interactant>
    <organismsDiffer>false</organismsDiffer>
    <experiments>6</experiments>
</comment>
<comment type="interaction">
    <interactant intactId="EBI-603340">
        <id>P49720</id>
    </interactant>
    <interactant intactId="EBI-727004">
        <id>O00560</id>
        <label>SDCBP</label>
    </interactant>
    <organismsDiffer>false</organismsDiffer>
    <experiments>3</experiments>
</comment>
<comment type="interaction">
    <interactant intactId="EBI-603340">
        <id>P49720</id>
    </interactant>
    <interactant intactId="EBI-719493">
        <id>P14373</id>
        <label>TRIM27</label>
    </interactant>
    <organismsDiffer>false</organismsDiffer>
    <experiments>6</experiments>
</comment>
<comment type="subcellular location">
    <subcellularLocation>
        <location evidence="2 12">Cytoplasm</location>
    </subcellularLocation>
    <subcellularLocation>
        <location evidence="2 12">Nucleus</location>
    </subcellularLocation>
    <text evidence="12">Translocated from the cytoplasm into the nucleus following interaction with AKIRIN2, which bridges the proteasome with the nuclear import receptor IPO9.</text>
</comment>
<comment type="induction">
    <text evidence="5">Up-regulated in asthenozoospermic sperm.</text>
</comment>
<comment type="similarity">
    <text evidence="1">Belongs to the peptidase T1B family.</text>
</comment>
<organism>
    <name type="scientific">Homo sapiens</name>
    <name type="common">Human</name>
    <dbReference type="NCBI Taxonomy" id="9606"/>
    <lineage>
        <taxon>Eukaryota</taxon>
        <taxon>Metazoa</taxon>
        <taxon>Chordata</taxon>
        <taxon>Craniata</taxon>
        <taxon>Vertebrata</taxon>
        <taxon>Euteleostomi</taxon>
        <taxon>Mammalia</taxon>
        <taxon>Eutheria</taxon>
        <taxon>Euarchontoglires</taxon>
        <taxon>Primates</taxon>
        <taxon>Haplorrhini</taxon>
        <taxon>Catarrhini</taxon>
        <taxon>Hominidae</taxon>
        <taxon>Homo</taxon>
    </lineage>
</organism>
<reference key="1">
    <citation type="journal article" date="1994" name="Biochim. Biophys. Acta">
        <title>Sequence analyses and inter-species comparisons of three novel human proteasomal subunits, HsN3, HsC7-I and HsC10-II, confine potential proteolytic active-site residues.</title>
        <authorList>
            <person name="Nothwang H.G."/>
            <person name="Tamura T."/>
            <person name="Tanaka K."/>
            <person name="Ichihara A."/>
        </authorList>
    </citation>
    <scope>NUCLEOTIDE SEQUENCE [MRNA]</scope>
    <scope>VARIANT LEU-34</scope>
</reference>
<reference key="2">
    <citation type="journal article" date="2004" name="Genome Res.">
        <title>The status, quality, and expansion of the NIH full-length cDNA project: the Mammalian Gene Collection (MGC).</title>
        <authorList>
            <consortium name="The MGC Project Team"/>
        </authorList>
    </citation>
    <scope>NUCLEOTIDE SEQUENCE [LARGE SCALE MRNA]</scope>
    <source>
        <tissue>Muscle</tissue>
    </source>
</reference>
<reference key="3">
    <citation type="submission" date="2008-07" db="UniProtKB">
        <authorList>
            <person name="Bienvenut W.V."/>
            <person name="von Kriegsheim A.F."/>
            <person name="Kolch W."/>
        </authorList>
    </citation>
    <scope>PROTEIN SEQUENCE OF 2-15; 28-41; 49-66; 71-77; 100-115 AND 178-192</scope>
    <scope>CLEAVAGE OF INITIATOR METHIONINE</scope>
    <scope>ACETYLATION AT SER-2</scope>
    <scope>IDENTIFICATION BY MASS SPECTROMETRY</scope>
    <source>
        <tissue>Ovarian carcinoma</tissue>
    </source>
</reference>
<reference key="4">
    <citation type="submission" date="2007-03" db="UniProtKB">
        <authorList>
            <person name="Lubec G."/>
            <person name="Vishwanath V."/>
        </authorList>
    </citation>
    <scope>PROTEIN SEQUENCE OF 29-42; 50-67 AND 101-116</scope>
    <scope>IDENTIFICATION BY MASS SPECTROMETRY</scope>
    <source>
        <tissue>Brain</tissue>
        <tissue>Cajal-Retzius cell</tissue>
    </source>
</reference>
<reference key="5">
    <citation type="journal article" date="1992" name="Electrophoresis">
        <title>Microsequences of 145 proteins recorded in the two-dimensional gel protein database of normal human epidermal keratinocytes.</title>
        <authorList>
            <person name="Rasmussen H.H."/>
            <person name="van Damme J."/>
            <person name="Puype M."/>
            <person name="Gesser B."/>
            <person name="Celis J.E."/>
            <person name="Vandekerckhove J."/>
        </authorList>
    </citation>
    <scope>PROTEIN SEQUENCE OF 49-66 AND 99-111</scope>
    <source>
        <tissue>Keratinocyte</tissue>
    </source>
</reference>
<reference key="6">
    <citation type="journal article" date="1994" name="Biochem. Biophys. Res. Commun.">
        <title>Human proteasome subunits from 2-dimensional gels identified by partial sequencing.</title>
        <authorList>
            <person name="Kristensen P."/>
            <person name="Johnsen A.H."/>
            <person name="Uerkvitz W."/>
            <person name="Tanaka K."/>
            <person name="Hendil K.B."/>
        </authorList>
    </citation>
    <scope>PROTEIN SEQUENCE OF 100-115</scope>
    <source>
        <tissue>Placenta</tissue>
    </source>
</reference>
<reference key="7">
    <citation type="journal article" date="1996" name="Nature">
        <title>A role for the proteasome regulator PA28alpha in antigen presentation.</title>
        <authorList>
            <person name="Groettrup M."/>
            <person name="Soza A."/>
            <person name="Eggers M."/>
            <person name="Kuehn L."/>
            <person name="Dick T.P."/>
            <person name="Schild H."/>
            <person name="Rammensee H.G."/>
            <person name="Koszinowski U.H."/>
            <person name="Kloetzel P.M."/>
        </authorList>
    </citation>
    <scope>FUNCTION IN ANTIGEN PRESENTATION</scope>
</reference>
<reference key="8">
    <citation type="journal article" date="2002" name="Mol. Biol. Cell">
        <title>Clastosome: a subtype of nuclear body enriched in 19S and 20S proteasomes, ubiquitin, and protein substrates of proteasome.</title>
        <authorList>
            <person name="Lafarga M."/>
            <person name="Berciano M.T."/>
            <person name="Pena E."/>
            <person name="Mayo I."/>
            <person name="Castano J.G."/>
            <person name="Bohmann D."/>
            <person name="Rodrigues J.P."/>
            <person name="Tavanez J.P."/>
            <person name="Carmo-Fonseca M."/>
        </authorList>
    </citation>
    <scope>SUBCELLULAR LOCATION</scope>
</reference>
<reference key="9">
    <citation type="journal article" date="2003" name="FEBS Lett.">
        <title>Human immunodeficiency virus-1 Tat protein interacts with distinct proteasomal alpha and beta subunits.</title>
        <authorList>
            <person name="Apcher G.S."/>
            <person name="Heink S."/>
            <person name="Zantopf D."/>
            <person name="Kloetzel P.-M."/>
            <person name="Schmid H.-P."/>
            <person name="Mayer R.J."/>
            <person name="Krueger E."/>
        </authorList>
    </citation>
    <scope>INTERACTION WITH HIV-1 TAT (MICROBIAL INFECTION)</scope>
</reference>
<reference key="10">
    <citation type="journal article" date="2004" name="Biomacromolecules">
        <title>20S proteasome prevents aggregation of heat-denatured proteins without PA700 regulatory subcomplex like a molecular chaperone.</title>
        <authorList>
            <person name="Yano M."/>
            <person name="Koumoto Y."/>
            <person name="Kanesaki Y."/>
            <person name="Wu X."/>
            <person name="Kido H."/>
        </authorList>
    </citation>
    <scope>FUNCTION</scope>
</reference>
<reference key="11">
    <citation type="journal article" date="2007" name="Biochemistry">
        <title>Mass spectrometric characterization of the affinity-purified human 26S proteasome complex.</title>
        <authorList>
            <person name="Wang X."/>
            <person name="Chen C.-F."/>
            <person name="Baker P.R."/>
            <person name="Chen P.-L."/>
            <person name="Kaiser P."/>
            <person name="Huang L."/>
        </authorList>
    </citation>
    <scope>IDENTIFICATION BY MASS SPECTROMETRY [LARGE SCALE ANALYSIS]</scope>
    <source>
        <tissue>Embryonic kidney</tissue>
    </source>
</reference>
<reference key="12">
    <citation type="journal article" date="2008" name="Hum. Reprod.">
        <title>Identification of proteomic differences in asthenozoospermic sperm samples.</title>
        <authorList>
            <person name="Martinez-Heredia J."/>
            <person name="de Mateo S."/>
            <person name="Vidal-Taboada J.M."/>
            <person name="Ballesca J.L."/>
            <person name="Oliva R."/>
        </authorList>
    </citation>
    <scope>INDUCTION</scope>
</reference>
<reference key="13">
    <citation type="journal article" date="2009" name="Anal. Chem.">
        <title>Lys-N and trypsin cover complementary parts of the phosphoproteome in a refined SCX-based approach.</title>
        <authorList>
            <person name="Gauci S."/>
            <person name="Helbig A.O."/>
            <person name="Slijper M."/>
            <person name="Krijgsveld J."/>
            <person name="Heck A.J."/>
            <person name="Mohammed S."/>
        </authorList>
    </citation>
    <scope>ACETYLATION [LARGE SCALE ANALYSIS] AT SER-2</scope>
    <scope>CLEAVAGE OF INITIATOR METHIONINE [LARGE SCALE ANALYSIS]</scope>
    <scope>IDENTIFICATION BY MASS SPECTROMETRY [LARGE SCALE ANALYSIS]</scope>
</reference>
<reference key="14">
    <citation type="journal article" date="2009" name="Science">
        <title>Lysine acetylation targets protein complexes and co-regulates major cellular functions.</title>
        <authorList>
            <person name="Choudhary C."/>
            <person name="Kumar C."/>
            <person name="Gnad F."/>
            <person name="Nielsen M.L."/>
            <person name="Rehman M."/>
            <person name="Walther T.C."/>
            <person name="Olsen J.V."/>
            <person name="Mann M."/>
        </authorList>
    </citation>
    <scope>ACETYLATION [LARGE SCALE ANALYSIS] AT LYS-77</scope>
    <scope>IDENTIFICATION BY MASS SPECTROMETRY [LARGE SCALE ANALYSIS]</scope>
</reference>
<reference key="15">
    <citation type="journal article" date="2011" name="BMC Syst. Biol.">
        <title>Initial characterization of the human central proteome.</title>
        <authorList>
            <person name="Burkard T.R."/>
            <person name="Planyavsky M."/>
            <person name="Kaupe I."/>
            <person name="Breitwieser F.P."/>
            <person name="Buerckstuemmer T."/>
            <person name="Bennett K.L."/>
            <person name="Superti-Furga G."/>
            <person name="Colinge J."/>
        </authorList>
    </citation>
    <scope>IDENTIFICATION BY MASS SPECTROMETRY [LARGE SCALE ANALYSIS]</scope>
</reference>
<reference key="16">
    <citation type="journal article" date="2012" name="Mol. Cell. Proteomics">
        <title>Comparative large-scale characterisation of plant vs. mammal proteins reveals similar and idiosyncratic N-alpha acetylation features.</title>
        <authorList>
            <person name="Bienvenut W.V."/>
            <person name="Sumpton D."/>
            <person name="Martinez A."/>
            <person name="Lilla S."/>
            <person name="Espagne C."/>
            <person name="Meinnel T."/>
            <person name="Giglione C."/>
        </authorList>
    </citation>
    <scope>ACETYLATION [LARGE SCALE ANALYSIS] AT SER-2</scope>
    <scope>CLEAVAGE OF INITIATOR METHIONINE [LARGE SCALE ANALYSIS]</scope>
    <scope>IDENTIFICATION BY MASS SPECTROMETRY [LARGE SCALE ANALYSIS]</scope>
</reference>
<reference key="17">
    <citation type="journal article" date="2013" name="Annu. Rev. Biochem.">
        <title>Molecular architecture and assembly of the eukaryotic proteasome.</title>
        <authorList>
            <person name="Tomko R.J. Jr."/>
            <person name="Hochstrasser M."/>
        </authorList>
    </citation>
    <scope>NOMENCLATURE</scope>
</reference>
<reference key="18">
    <citation type="journal article" date="2014" name="J. Proteomics">
        <title>An enzyme assisted RP-RPLC approach for in-depth analysis of human liver phosphoproteome.</title>
        <authorList>
            <person name="Bian Y."/>
            <person name="Song C."/>
            <person name="Cheng K."/>
            <person name="Dong M."/>
            <person name="Wang F."/>
            <person name="Huang J."/>
            <person name="Sun D."/>
            <person name="Wang L."/>
            <person name="Ye M."/>
            <person name="Zou H."/>
        </authorList>
    </citation>
    <scope>IDENTIFICATION BY MASS SPECTROMETRY [LARGE SCALE ANALYSIS]</scope>
    <source>
        <tissue>Liver</tissue>
    </source>
</reference>
<reference key="19">
    <citation type="journal article" date="2016" name="Biol. Chem.">
        <title>Human 20S proteasome activity towards fluorogenic peptides of various chain lengths.</title>
        <authorList>
            <person name="Rut W."/>
            <person name="Drag M."/>
        </authorList>
    </citation>
    <scope>FUNCTION</scope>
</reference>
<reference key="20">
    <citation type="journal article" date="2015" name="Nat. Commun.">
        <title>Cryo-EM reveals the conformation of a substrate analogue in the human 20S proteasome core.</title>
        <authorList>
            <person name="da Fonseca P.C."/>
            <person name="Morris E.P."/>
        </authorList>
    </citation>
    <scope>STRUCTURE BY ELECTRON MICROSCOPY (3.50 ANGSTROMS)</scope>
    <scope>SUBUNIT</scope>
</reference>
<reference key="21">
    <citation type="journal article" date="2015" name="Structure">
        <title>Crystal structure of the human 20S proteasome in complex with carfilzomib.</title>
        <authorList>
            <person name="Harshbarger W."/>
            <person name="Miller C."/>
            <person name="Diedrich C."/>
            <person name="Sacchettini J."/>
        </authorList>
    </citation>
    <scope>X-RAY CRYSTALLOGRAPHY (2.60 ANGSTROMS)</scope>
    <scope>SUBUNIT</scope>
</reference>
<reference key="22">
    <citation type="journal article" date="2016" name="Nat. Struct. Mol. Biol.">
        <title>An atomic structure of the human 26S proteasome.</title>
        <authorList>
            <person name="Huang X."/>
            <person name="Luan B."/>
            <person name="Wu J."/>
            <person name="Shi Y."/>
        </authorList>
    </citation>
    <scope>STRUCTURE BY ELECTRON MICROSCOPY (3.50 ANGSTROMS)</scope>
    <scope>SUBUNIT</scope>
</reference>
<reference key="23">
    <citation type="journal article" date="2016" name="Proc. Natl. Acad. Sci. U.S.A.">
        <title>Structure of the human 26S proteasome at a resolution of 3.9 Aa.</title>
        <authorList>
            <person name="Schweitzer A."/>
            <person name="Aufderheide A."/>
            <person name="Rudack T."/>
            <person name="Beck F."/>
            <person name="Pfeifer G."/>
            <person name="Plitzko J.M."/>
            <person name="Sakata E."/>
            <person name="Schulten K."/>
            <person name="Foerster F."/>
            <person name="Baumeister W."/>
        </authorList>
    </citation>
    <scope>STRUCTURE BY ELECTRON MICROSCOPY (4.02 ANGSTROMS)</scope>
    <scope>SUBUNIT</scope>
</reference>
<reference key="24">
    <citation type="journal article" date="2016" name="Science">
        <title>The inhibition mechanism of human 20S proteasomes enables next-generation inhibitor design.</title>
        <authorList>
            <person name="Schrader J."/>
            <person name="Henneberg F."/>
            <person name="Mata R.A."/>
            <person name="Tittmann K."/>
            <person name="Schneider T.R."/>
            <person name="Stark H."/>
            <person name="Bourenkov G."/>
            <person name="Chari A."/>
        </authorList>
    </citation>
    <scope>X-RAY CRYSTALLOGRAPHY (1.80 ANGSTROMS)</scope>
    <scope>SUBUNIT</scope>
</reference>
<reference key="25">
    <citation type="journal article" date="2021" name="Nature">
        <title>AKIRIN2 controls the nuclear import of proteasomes in vertebrates.</title>
        <authorList>
            <person name="de Almeida M."/>
            <person name="Hinterndorfer M."/>
            <person name="Brunner H."/>
            <person name="Grishkovskaya I."/>
            <person name="Singh K."/>
            <person name="Schleiffer A."/>
            <person name="Jude J."/>
            <person name="Deswal S."/>
            <person name="Kalis R."/>
            <person name="Vunjak M."/>
            <person name="Lendl T."/>
            <person name="Imre R."/>
            <person name="Roitinger E."/>
            <person name="Neumann T."/>
            <person name="Kandolf S."/>
            <person name="Schutzbier M."/>
            <person name="Mechtler K."/>
            <person name="Versteeg G.A."/>
            <person name="Haselbach D."/>
            <person name="Zuber J."/>
        </authorList>
    </citation>
    <scope>STRUCTURE BY ELECTRON MICROSCOPY (2.80 ANGSTROMS) IN COMPLEX WITH AKIRIN2</scope>
    <scope>SUBUNIT</scope>
    <scope>SUBCELLULAR LOCATION</scope>
</reference>